<name>NIG2A_ODOIS</name>
<comment type="function">
    <text evidence="3">Has antimicrobial activity against Gram-negative bacterium E.coli ATCC 8739 (MIC=25 ug), against Gram positive bacteria S.aureus ATCC 6538 (MIC=3.1 ug), methicillin-resistant S.aureus ATCC 43300 (MIC=12.5 ug), B.subtilis ATCC 6633 (MIC=12.5 ug) and against fungus C.albicans ATCC 90028 (MIC=50 ug).</text>
</comment>
<comment type="subcellular location">
    <subcellularLocation>
        <location evidence="6">Secreted</location>
    </subcellularLocation>
</comment>
<comment type="tissue specificity">
    <text evidence="6">Expressed by the skin glands.</text>
</comment>
<comment type="mass spectrometry"/>
<comment type="similarity">
    <text evidence="5">Belongs to the frog skin active peptide (FSAP) family. Brevinin subfamily.</text>
</comment>
<dbReference type="EMBL" id="AB602058">
    <property type="protein sequence ID" value="BAK08588.1"/>
    <property type="molecule type" value="mRNA"/>
</dbReference>
<dbReference type="GO" id="GO:0005576">
    <property type="term" value="C:extracellular region"/>
    <property type="evidence" value="ECO:0000314"/>
    <property type="project" value="UniProtKB"/>
</dbReference>
<dbReference type="GO" id="GO:0050832">
    <property type="term" value="P:defense response to fungus"/>
    <property type="evidence" value="ECO:0000314"/>
    <property type="project" value="UniProtKB"/>
</dbReference>
<dbReference type="GO" id="GO:0050829">
    <property type="term" value="P:defense response to Gram-negative bacterium"/>
    <property type="evidence" value="ECO:0000314"/>
    <property type="project" value="UniProtKB"/>
</dbReference>
<dbReference type="GO" id="GO:0050830">
    <property type="term" value="P:defense response to Gram-positive bacterium"/>
    <property type="evidence" value="ECO:0000314"/>
    <property type="project" value="UniProtKB"/>
</dbReference>
<dbReference type="GO" id="GO:0031640">
    <property type="term" value="P:killing of cells of another organism"/>
    <property type="evidence" value="ECO:0007669"/>
    <property type="project" value="UniProtKB-KW"/>
</dbReference>
<dbReference type="InterPro" id="IPR004275">
    <property type="entry name" value="Frog_antimicrobial_propeptide"/>
</dbReference>
<dbReference type="InterPro" id="IPR032749">
    <property type="entry name" value="Nigrocin"/>
</dbReference>
<dbReference type="Pfam" id="PF16047">
    <property type="entry name" value="Antimicrobial22"/>
    <property type="match status" value="1"/>
</dbReference>
<dbReference type="Pfam" id="PF03032">
    <property type="entry name" value="FSAP_sig_propep"/>
    <property type="match status" value="1"/>
</dbReference>
<sequence>MFTLKKSMLLLFFLGTINLSLCQEERDAEEERRDEDNAKMEEIKRGIFSTVFKAGKGIVCGLTGLC</sequence>
<organism evidence="4">
    <name type="scientific">Odorrana ishikawae</name>
    <name type="common">Ishikawa's frog</name>
    <name type="synonym">Rana ishikawae</name>
    <dbReference type="NCBI Taxonomy" id="310659"/>
    <lineage>
        <taxon>Eukaryota</taxon>
        <taxon>Metazoa</taxon>
        <taxon>Chordata</taxon>
        <taxon>Craniata</taxon>
        <taxon>Vertebrata</taxon>
        <taxon>Euteleostomi</taxon>
        <taxon>Amphibia</taxon>
        <taxon>Batrachia</taxon>
        <taxon>Anura</taxon>
        <taxon>Neobatrachia</taxon>
        <taxon>Ranoidea</taxon>
        <taxon>Ranidae</taxon>
        <taxon>Odorrana</taxon>
    </lineage>
</organism>
<keyword id="KW-0878">Amphibian defense peptide</keyword>
<keyword id="KW-0044">Antibiotic</keyword>
<keyword id="KW-0929">Antimicrobial</keyword>
<keyword id="KW-0165">Cleavage on pair of basic residues</keyword>
<keyword id="KW-0903">Direct protein sequencing</keyword>
<keyword id="KW-1015">Disulfide bond</keyword>
<keyword id="KW-0295">Fungicide</keyword>
<keyword id="KW-0964">Secreted</keyword>
<keyword id="KW-0732">Signal</keyword>
<feature type="signal peptide" evidence="2">
    <location>
        <begin position="1"/>
        <end position="22"/>
    </location>
</feature>
<feature type="propeptide" id="PRO_0000439613" description="Removed in mature form" evidence="6">
    <location>
        <begin position="23"/>
        <end position="43"/>
    </location>
</feature>
<feature type="peptide" id="PRO_0000439614" description="Nigrocin-2ISa" evidence="3">
    <location>
        <begin position="46"/>
        <end position="66"/>
    </location>
</feature>
<feature type="disulfide bond" evidence="1">
    <location>
        <begin position="60"/>
        <end position="66"/>
    </location>
</feature>
<reference evidence="7" key="1">
    <citation type="journal article" date="2011" name="Peptides">
        <title>Identification and characterization of antimicrobial peptides from the skin of the endangered frog Odorrana ishikawae.</title>
        <authorList>
            <person name="Iwakoshi-Ukena E."/>
            <person name="Ukena K."/>
            <person name="Okimoto A."/>
            <person name="Soga M."/>
            <person name="Okada G."/>
            <person name="Sano N."/>
            <person name="Fujii T."/>
            <person name="Sugawara Y."/>
            <person name="Sumida M."/>
        </authorList>
    </citation>
    <scope>NUCLEOTIDE SEQUENCE [MRNA]</scope>
    <scope>PROTEIN SEQUENCE OF 46-66</scope>
    <scope>FUNCTION</scope>
    <scope>SYNTHESIS</scope>
    <scope>MASS SPECTROMETRY</scope>
    <source>
        <tissue evidence="4">Skin</tissue>
    </source>
</reference>
<accession>F1T156</accession>
<proteinExistence type="evidence at protein level"/>
<evidence type="ECO:0000250" key="1">
    <source>
        <dbReference type="UniProtKB" id="P39084"/>
    </source>
</evidence>
<evidence type="ECO:0000255" key="2"/>
<evidence type="ECO:0000269" key="3">
    <source>
    </source>
</evidence>
<evidence type="ECO:0000303" key="4">
    <source>
    </source>
</evidence>
<evidence type="ECO:0000305" key="5"/>
<evidence type="ECO:0000305" key="6">
    <source>
    </source>
</evidence>
<evidence type="ECO:0000312" key="7">
    <source>
        <dbReference type="EMBL" id="BAK08588.1"/>
    </source>
</evidence>
<protein>
    <recommendedName>
        <fullName evidence="4">Nigrocin-2ISa</fullName>
    </recommendedName>
</protein>